<dbReference type="EC" id="4.1.1.11" evidence="1"/>
<dbReference type="EMBL" id="CR931997">
    <property type="protein sequence ID" value="CAI36444.1"/>
    <property type="molecule type" value="Genomic_DNA"/>
</dbReference>
<dbReference type="RefSeq" id="WP_011273004.1">
    <property type="nucleotide sequence ID" value="NC_007164.1"/>
</dbReference>
<dbReference type="SMR" id="Q4JXL3"/>
<dbReference type="STRING" id="306537.jk0292"/>
<dbReference type="KEGG" id="cjk:jk0292"/>
<dbReference type="PATRIC" id="fig|306537.10.peg.302"/>
<dbReference type="eggNOG" id="COG0853">
    <property type="taxonomic scope" value="Bacteria"/>
</dbReference>
<dbReference type="HOGENOM" id="CLU_115305_2_0_11"/>
<dbReference type="OrthoDB" id="9803983at2"/>
<dbReference type="UniPathway" id="UPA00028">
    <property type="reaction ID" value="UER00002"/>
</dbReference>
<dbReference type="Proteomes" id="UP000000545">
    <property type="component" value="Chromosome"/>
</dbReference>
<dbReference type="GO" id="GO:0005829">
    <property type="term" value="C:cytosol"/>
    <property type="evidence" value="ECO:0007669"/>
    <property type="project" value="TreeGrafter"/>
</dbReference>
<dbReference type="GO" id="GO:0004068">
    <property type="term" value="F:aspartate 1-decarboxylase activity"/>
    <property type="evidence" value="ECO:0007669"/>
    <property type="project" value="UniProtKB-UniRule"/>
</dbReference>
<dbReference type="GO" id="GO:0006523">
    <property type="term" value="P:alanine biosynthetic process"/>
    <property type="evidence" value="ECO:0007669"/>
    <property type="project" value="InterPro"/>
</dbReference>
<dbReference type="GO" id="GO:0015940">
    <property type="term" value="P:pantothenate biosynthetic process"/>
    <property type="evidence" value="ECO:0007669"/>
    <property type="project" value="UniProtKB-UniRule"/>
</dbReference>
<dbReference type="CDD" id="cd06919">
    <property type="entry name" value="Asp_decarbox"/>
    <property type="match status" value="1"/>
</dbReference>
<dbReference type="Gene3D" id="2.40.40.20">
    <property type="match status" value="1"/>
</dbReference>
<dbReference type="HAMAP" id="MF_00446">
    <property type="entry name" value="PanD"/>
    <property type="match status" value="1"/>
</dbReference>
<dbReference type="InterPro" id="IPR009010">
    <property type="entry name" value="Asp_de-COase-like_dom_sf"/>
</dbReference>
<dbReference type="InterPro" id="IPR003190">
    <property type="entry name" value="Asp_decarbox"/>
</dbReference>
<dbReference type="NCBIfam" id="TIGR00223">
    <property type="entry name" value="panD"/>
    <property type="match status" value="1"/>
</dbReference>
<dbReference type="PANTHER" id="PTHR21012">
    <property type="entry name" value="ASPARTATE 1-DECARBOXYLASE"/>
    <property type="match status" value="1"/>
</dbReference>
<dbReference type="PANTHER" id="PTHR21012:SF0">
    <property type="entry name" value="ASPARTATE 1-DECARBOXYLASE"/>
    <property type="match status" value="1"/>
</dbReference>
<dbReference type="Pfam" id="PF02261">
    <property type="entry name" value="Asp_decarbox"/>
    <property type="match status" value="1"/>
</dbReference>
<dbReference type="PIRSF" id="PIRSF006246">
    <property type="entry name" value="Asp_decarbox"/>
    <property type="match status" value="1"/>
</dbReference>
<dbReference type="SUPFAM" id="SSF50692">
    <property type="entry name" value="ADC-like"/>
    <property type="match status" value="1"/>
</dbReference>
<sequence length="138" mass="14767">MLRTMLKSKIHRATVTQADLHYVGSCTIDADLMEAADILEGEQIDIVDIDNGNRLTTYAITGDRGTGVIGINGAAARLISPGDLVIIIGYAQYSEEDLKNYASRVVFVDGNNKQVELGGDPAQVPDGSGLKNPRHPEA</sequence>
<reference key="1">
    <citation type="journal article" date="2005" name="J. Bacteriol.">
        <title>Complete genome sequence and analysis of the multiresistant nosocomial pathogen Corynebacterium jeikeium K411, a lipid-requiring bacterium of the human skin flora.</title>
        <authorList>
            <person name="Tauch A."/>
            <person name="Kaiser O."/>
            <person name="Hain T."/>
            <person name="Goesmann A."/>
            <person name="Weisshaar B."/>
            <person name="Albersmeier A."/>
            <person name="Bekel T."/>
            <person name="Bischoff N."/>
            <person name="Brune I."/>
            <person name="Chakraborty T."/>
            <person name="Kalinowski J."/>
            <person name="Meyer F."/>
            <person name="Rupp O."/>
            <person name="Schneiker S."/>
            <person name="Viehoever P."/>
            <person name="Puehler A."/>
        </authorList>
    </citation>
    <scope>NUCLEOTIDE SEQUENCE [LARGE SCALE GENOMIC DNA]</scope>
    <source>
        <strain>K411</strain>
    </source>
</reference>
<gene>
    <name evidence="1" type="primary">panD</name>
    <name type="ordered locus">jk0292</name>
</gene>
<name>PAND_CORJK</name>
<protein>
    <recommendedName>
        <fullName evidence="1">Aspartate 1-decarboxylase</fullName>
        <ecNumber evidence="1">4.1.1.11</ecNumber>
    </recommendedName>
    <alternativeName>
        <fullName evidence="1">Aspartate alpha-decarboxylase</fullName>
    </alternativeName>
    <component>
        <recommendedName>
            <fullName evidence="1">Aspartate 1-decarboxylase beta chain</fullName>
        </recommendedName>
    </component>
    <component>
        <recommendedName>
            <fullName evidence="1">Aspartate 1-decarboxylase alpha chain</fullName>
        </recommendedName>
    </component>
</protein>
<organism>
    <name type="scientific">Corynebacterium jeikeium (strain K411)</name>
    <dbReference type="NCBI Taxonomy" id="306537"/>
    <lineage>
        <taxon>Bacteria</taxon>
        <taxon>Bacillati</taxon>
        <taxon>Actinomycetota</taxon>
        <taxon>Actinomycetes</taxon>
        <taxon>Mycobacteriales</taxon>
        <taxon>Corynebacteriaceae</taxon>
        <taxon>Corynebacterium</taxon>
    </lineage>
</organism>
<evidence type="ECO:0000255" key="1">
    <source>
        <dbReference type="HAMAP-Rule" id="MF_00446"/>
    </source>
</evidence>
<evidence type="ECO:0000256" key="2">
    <source>
        <dbReference type="SAM" id="MobiDB-lite"/>
    </source>
</evidence>
<accession>Q4JXL3</accession>
<keyword id="KW-0068">Autocatalytic cleavage</keyword>
<keyword id="KW-0963">Cytoplasm</keyword>
<keyword id="KW-0210">Decarboxylase</keyword>
<keyword id="KW-0456">Lyase</keyword>
<keyword id="KW-0566">Pantothenate biosynthesis</keyword>
<keyword id="KW-0670">Pyruvate</keyword>
<keyword id="KW-1185">Reference proteome</keyword>
<keyword id="KW-0704">Schiff base</keyword>
<keyword id="KW-0865">Zymogen</keyword>
<feature type="chain" id="PRO_0000236863" description="Aspartate 1-decarboxylase beta chain" evidence="1">
    <location>
        <begin position="1"/>
        <end position="24"/>
    </location>
</feature>
<feature type="chain" id="PRO_0000236864" description="Aspartate 1-decarboxylase alpha chain" evidence="1">
    <location>
        <begin position="25"/>
        <end position="138"/>
    </location>
</feature>
<feature type="region of interest" description="Disordered" evidence="2">
    <location>
        <begin position="116"/>
        <end position="138"/>
    </location>
</feature>
<feature type="active site" description="Schiff-base intermediate with substrate; via pyruvic acid" evidence="1">
    <location>
        <position position="25"/>
    </location>
</feature>
<feature type="active site" description="Proton donor" evidence="1">
    <location>
        <position position="58"/>
    </location>
</feature>
<feature type="binding site" evidence="1">
    <location>
        <position position="57"/>
    </location>
    <ligand>
        <name>substrate</name>
    </ligand>
</feature>
<feature type="binding site" evidence="1">
    <location>
        <begin position="73"/>
        <end position="75"/>
    </location>
    <ligand>
        <name>substrate</name>
    </ligand>
</feature>
<feature type="modified residue" description="Pyruvic acid (Ser)" evidence="1">
    <location>
        <position position="25"/>
    </location>
</feature>
<comment type="function">
    <text evidence="1">Catalyzes the pyruvoyl-dependent decarboxylation of aspartate to produce beta-alanine.</text>
</comment>
<comment type="catalytic activity">
    <reaction evidence="1">
        <text>L-aspartate + H(+) = beta-alanine + CO2</text>
        <dbReference type="Rhea" id="RHEA:19497"/>
        <dbReference type="ChEBI" id="CHEBI:15378"/>
        <dbReference type="ChEBI" id="CHEBI:16526"/>
        <dbReference type="ChEBI" id="CHEBI:29991"/>
        <dbReference type="ChEBI" id="CHEBI:57966"/>
        <dbReference type="EC" id="4.1.1.11"/>
    </reaction>
</comment>
<comment type="cofactor">
    <cofactor evidence="1">
        <name>pyruvate</name>
        <dbReference type="ChEBI" id="CHEBI:15361"/>
    </cofactor>
    <text evidence="1">Binds 1 pyruvoyl group covalently per subunit.</text>
</comment>
<comment type="pathway">
    <text evidence="1">Cofactor biosynthesis; (R)-pantothenate biosynthesis; beta-alanine from L-aspartate: step 1/1.</text>
</comment>
<comment type="subunit">
    <text evidence="1">Heterooctamer of four alpha and four beta subunits.</text>
</comment>
<comment type="subcellular location">
    <subcellularLocation>
        <location evidence="1">Cytoplasm</location>
    </subcellularLocation>
</comment>
<comment type="PTM">
    <text evidence="1">Is synthesized initially as an inactive proenzyme, which is activated by self-cleavage at a specific serine bond to produce a beta-subunit with a hydroxyl group at its C-terminus and an alpha-subunit with a pyruvoyl group at its N-terminus.</text>
</comment>
<comment type="similarity">
    <text evidence="1">Belongs to the PanD family.</text>
</comment>
<proteinExistence type="inferred from homology"/>